<accession>Q4H1G4</accession>
<comment type="function">
    <text evidence="5 8">Catalyzes the formation of S-adenosylmethionine from methionine and ATP. The reaction comprises two steps that are both catalyzed by the same enzyme: formation of S-adenosylmethionine (AdoMet) and triphosphate, and subsequent hydrolysis of the triphosphate (By similarity). May be involved in the synthesis of betain in response to abiotic stress such as high salinity (Ref.1).</text>
</comment>
<comment type="catalytic activity">
    <reaction evidence="5">
        <text>L-methionine + ATP + H2O = S-adenosyl-L-methionine + phosphate + diphosphate</text>
        <dbReference type="Rhea" id="RHEA:21080"/>
        <dbReference type="ChEBI" id="CHEBI:15377"/>
        <dbReference type="ChEBI" id="CHEBI:30616"/>
        <dbReference type="ChEBI" id="CHEBI:33019"/>
        <dbReference type="ChEBI" id="CHEBI:43474"/>
        <dbReference type="ChEBI" id="CHEBI:57844"/>
        <dbReference type="ChEBI" id="CHEBI:59789"/>
        <dbReference type="EC" id="2.5.1.6"/>
    </reaction>
</comment>
<comment type="cofactor">
    <cofactor evidence="5">
        <name>Mn(2+)</name>
        <dbReference type="ChEBI" id="CHEBI:29035"/>
    </cofactor>
    <cofactor evidence="5">
        <name>Mg(2+)</name>
        <dbReference type="ChEBI" id="CHEBI:18420"/>
    </cofactor>
    <cofactor evidence="5">
        <name>Co(2+)</name>
        <dbReference type="ChEBI" id="CHEBI:48828"/>
    </cofactor>
    <text evidence="3 5">Binds 2 divalent ions per subunit. The metal ions interact primarily with the substrate (By similarity). Can utilize magnesium, manganese or cobalt (in vitro) (By similarity).</text>
</comment>
<comment type="cofactor">
    <cofactor evidence="5">
        <name>K(+)</name>
        <dbReference type="ChEBI" id="CHEBI:29103"/>
    </cofactor>
    <text evidence="3">Binds 1 potassium ion per subunit. The potassium ion interacts primarily with the substrate (By similarity).</text>
</comment>
<comment type="pathway">
    <text evidence="5">Amino-acid biosynthesis; S-adenosyl-L-methionine biosynthesis; S-adenosyl-L-methionine from L-methionine: step 1/1.</text>
</comment>
<comment type="subunit">
    <text evidence="1">Homotetramer.</text>
</comment>
<comment type="subcellular location">
    <subcellularLocation>
        <location evidence="1">Cytoplasm</location>
    </subcellularLocation>
</comment>
<comment type="induction">
    <text evidence="6">By salt stress. Follow a circadian regulation with higher levels in the light.</text>
</comment>
<comment type="similarity">
    <text evidence="7">Belongs to the AdoMet synthase family.</text>
</comment>
<sequence>MAAPIDTFLFTSESVNEGHPDKMCDQISDAVLDACLAQDPESKVACETCTKTNLVMVFGEITTKGNVDYEKIVRQTCRDIGFVSADVGLDADNCKVLVYIEQQSPDIAQGVHGHLTKRPEEIGAGDQGHMFGYATDETPELMPLSHVLATKLGARLTEVRKNGTCPWLRPDGKTQVTVEYYNDNGAMVPIRVHTVLISTQHDETVTNDEIAADLKEHVIKPVIPEKYLDEKTIFHLNPSGRFVIGGPHGDAGLTGRKIIIDTYGGWGAHGGGAFSGKDPTKVDRSGAYIARQAAKSIVASGLARRCIVQISYAIGVPEPLSVFVDTYGTGKIPDKDILKIVKETFDFRPGMIAINLDLLKGGSRYLKTAAYGHFGRDDPDFTWEVVKPLKWDKPQA</sequence>
<keyword id="KW-0067">ATP-binding</keyword>
<keyword id="KW-0170">Cobalt</keyword>
<keyword id="KW-0963">Cytoplasm</keyword>
<keyword id="KW-0460">Magnesium</keyword>
<keyword id="KW-0479">Metal-binding</keyword>
<keyword id="KW-0547">Nucleotide-binding</keyword>
<keyword id="KW-0554">One-carbon metabolism</keyword>
<keyword id="KW-0630">Potassium</keyword>
<keyword id="KW-0808">Transferase</keyword>
<organism>
    <name type="scientific">Beta vulgaris</name>
    <name type="common">Sugar beet</name>
    <dbReference type="NCBI Taxonomy" id="161934"/>
    <lineage>
        <taxon>Eukaryota</taxon>
        <taxon>Viridiplantae</taxon>
        <taxon>Streptophyta</taxon>
        <taxon>Embryophyta</taxon>
        <taxon>Tracheophyta</taxon>
        <taxon>Spermatophyta</taxon>
        <taxon>Magnoliopsida</taxon>
        <taxon>eudicotyledons</taxon>
        <taxon>Gunneridae</taxon>
        <taxon>Pentapetalae</taxon>
        <taxon>Caryophyllales</taxon>
        <taxon>Chenopodiaceae</taxon>
        <taxon>Betoideae</taxon>
        <taxon>Beta</taxon>
    </lineage>
</organism>
<evidence type="ECO:0000250" key="1"/>
<evidence type="ECO:0000250" key="2">
    <source>
        <dbReference type="UniProtKB" id="P0A817"/>
    </source>
</evidence>
<evidence type="ECO:0000250" key="3">
    <source>
        <dbReference type="UniProtKB" id="P13444"/>
    </source>
</evidence>
<evidence type="ECO:0000250" key="4">
    <source>
        <dbReference type="UniProtKB" id="Q00266"/>
    </source>
</evidence>
<evidence type="ECO:0000250" key="5">
    <source>
        <dbReference type="UniProtKB" id="Q96551"/>
    </source>
</evidence>
<evidence type="ECO:0000269" key="6">
    <source ref="1"/>
</evidence>
<evidence type="ECO:0000305" key="7"/>
<evidence type="ECO:0000305" key="8">
    <source ref="1"/>
</evidence>
<gene>
    <name type="primary">SAMS1</name>
</gene>
<protein>
    <recommendedName>
        <fullName>S-adenosylmethionine synthase 1</fullName>
        <shortName>AdoMet synthase 1</shortName>
        <ecNumber evidence="5">2.5.1.6</ecNumber>
    </recommendedName>
    <alternativeName>
        <fullName>Methionine adenosyltransferase 1</fullName>
        <shortName>MAT 1</shortName>
    </alternativeName>
</protein>
<feature type="chain" id="PRO_0000363009" description="S-adenosylmethionine synthase 1">
    <location>
        <begin position="1"/>
        <end position="396"/>
    </location>
</feature>
<feature type="binding site" evidence="3">
    <location>
        <position position="13"/>
    </location>
    <ligand>
        <name>Mg(2+)</name>
        <dbReference type="ChEBI" id="CHEBI:18420"/>
    </ligand>
</feature>
<feature type="binding site" description="in other chain" evidence="4">
    <location>
        <position position="19"/>
    </location>
    <ligand>
        <name>ATP</name>
        <dbReference type="ChEBI" id="CHEBI:30616"/>
        <note>ligand shared between two neighboring subunits</note>
    </ligand>
</feature>
<feature type="binding site" evidence="2">
    <location>
        <position position="47"/>
    </location>
    <ligand>
        <name>K(+)</name>
        <dbReference type="ChEBI" id="CHEBI:29103"/>
    </ligand>
</feature>
<feature type="binding site" description="in other chain" evidence="2">
    <location>
        <position position="60"/>
    </location>
    <ligand>
        <name>L-methionine</name>
        <dbReference type="ChEBI" id="CHEBI:57844"/>
        <note>ligand shared between two neighboring subunits</note>
    </ligand>
</feature>
<feature type="binding site" description="in other chain" evidence="2">
    <location>
        <position position="103"/>
    </location>
    <ligand>
        <name>L-methionine</name>
        <dbReference type="ChEBI" id="CHEBI:57844"/>
        <note>ligand shared between two neighboring subunits</note>
    </ligand>
</feature>
<feature type="binding site" description="in other chain" evidence="4">
    <location>
        <begin position="171"/>
        <end position="173"/>
    </location>
    <ligand>
        <name>ATP</name>
        <dbReference type="ChEBI" id="CHEBI:30616"/>
        <note>ligand shared between two neighboring subunits</note>
    </ligand>
</feature>
<feature type="binding site" description="in other chain" evidence="4">
    <location>
        <begin position="239"/>
        <end position="242"/>
    </location>
    <ligand>
        <name>ATP</name>
        <dbReference type="ChEBI" id="CHEBI:30616"/>
        <note>ligand shared between two neighboring subunits</note>
    </ligand>
</feature>
<feature type="binding site" description="in other chain" evidence="4">
    <location>
        <position position="250"/>
    </location>
    <ligand>
        <name>ATP</name>
        <dbReference type="ChEBI" id="CHEBI:30616"/>
        <note>ligand shared between two neighboring subunits</note>
    </ligand>
</feature>
<feature type="binding site" evidence="2">
    <location>
        <position position="250"/>
    </location>
    <ligand>
        <name>L-methionine</name>
        <dbReference type="ChEBI" id="CHEBI:57844"/>
        <note>ligand shared between two neighboring subunits</note>
    </ligand>
</feature>
<feature type="binding site" description="in other chain" evidence="2">
    <location>
        <begin position="256"/>
        <end position="257"/>
    </location>
    <ligand>
        <name>ATP</name>
        <dbReference type="ChEBI" id="CHEBI:30616"/>
        <note>ligand shared between two neighboring subunits</note>
    </ligand>
</feature>
<feature type="binding site" evidence="2">
    <location>
        <position position="273"/>
    </location>
    <ligand>
        <name>ATP</name>
        <dbReference type="ChEBI" id="CHEBI:30616"/>
        <note>ligand shared between two neighboring subunits</note>
    </ligand>
</feature>
<feature type="binding site" evidence="2">
    <location>
        <position position="277"/>
    </location>
    <ligand>
        <name>ATP</name>
        <dbReference type="ChEBI" id="CHEBI:30616"/>
        <note>ligand shared between two neighboring subunits</note>
    </ligand>
</feature>
<feature type="binding site" evidence="3">
    <location>
        <position position="281"/>
    </location>
    <ligand>
        <name>ATP</name>
        <dbReference type="ChEBI" id="CHEBI:30616"/>
        <note>ligand shared between two neighboring subunits</note>
    </ligand>
</feature>
<feature type="binding site" description="in other chain" evidence="2">
    <location>
        <position position="281"/>
    </location>
    <ligand>
        <name>L-methionine</name>
        <dbReference type="ChEBI" id="CHEBI:57844"/>
        <note>ligand shared between two neighboring subunits</note>
    </ligand>
</feature>
<dbReference type="EC" id="2.5.1.6" evidence="5"/>
<dbReference type="EMBL" id="AB221009">
    <property type="protein sequence ID" value="BAE07179.1"/>
    <property type="molecule type" value="mRNA"/>
</dbReference>
<dbReference type="SMR" id="Q4H1G4"/>
<dbReference type="UniPathway" id="UPA00315">
    <property type="reaction ID" value="UER00080"/>
</dbReference>
<dbReference type="GO" id="GO:0005737">
    <property type="term" value="C:cytoplasm"/>
    <property type="evidence" value="ECO:0007669"/>
    <property type="project" value="UniProtKB-SubCell"/>
</dbReference>
<dbReference type="GO" id="GO:0005524">
    <property type="term" value="F:ATP binding"/>
    <property type="evidence" value="ECO:0007669"/>
    <property type="project" value="UniProtKB-KW"/>
</dbReference>
<dbReference type="GO" id="GO:0046872">
    <property type="term" value="F:metal ion binding"/>
    <property type="evidence" value="ECO:0007669"/>
    <property type="project" value="UniProtKB-KW"/>
</dbReference>
<dbReference type="GO" id="GO:0004478">
    <property type="term" value="F:methionine adenosyltransferase activity"/>
    <property type="evidence" value="ECO:0007669"/>
    <property type="project" value="UniProtKB-EC"/>
</dbReference>
<dbReference type="GO" id="GO:0006730">
    <property type="term" value="P:one-carbon metabolic process"/>
    <property type="evidence" value="ECO:0007669"/>
    <property type="project" value="UniProtKB-KW"/>
</dbReference>
<dbReference type="GO" id="GO:0006556">
    <property type="term" value="P:S-adenosylmethionine biosynthetic process"/>
    <property type="evidence" value="ECO:0007669"/>
    <property type="project" value="UniProtKB-UniPathway"/>
</dbReference>
<dbReference type="CDD" id="cd18079">
    <property type="entry name" value="S-AdoMet_synt"/>
    <property type="match status" value="1"/>
</dbReference>
<dbReference type="FunFam" id="3.30.300.10:FF:000001">
    <property type="entry name" value="S-adenosylmethionine synthase"/>
    <property type="match status" value="1"/>
</dbReference>
<dbReference type="FunFam" id="3.30.300.10:FF:000003">
    <property type="entry name" value="S-adenosylmethionine synthase"/>
    <property type="match status" value="1"/>
</dbReference>
<dbReference type="FunFam" id="3.30.300.10:FF:000004">
    <property type="entry name" value="S-adenosylmethionine synthase"/>
    <property type="match status" value="1"/>
</dbReference>
<dbReference type="Gene3D" id="3.30.300.10">
    <property type="match status" value="3"/>
</dbReference>
<dbReference type="HAMAP" id="MF_00086">
    <property type="entry name" value="S_AdoMet_synth1"/>
    <property type="match status" value="1"/>
</dbReference>
<dbReference type="InterPro" id="IPR022631">
    <property type="entry name" value="ADOMET_SYNTHASE_CS"/>
</dbReference>
<dbReference type="InterPro" id="IPR022630">
    <property type="entry name" value="S-AdoMet_synt_C"/>
</dbReference>
<dbReference type="InterPro" id="IPR022629">
    <property type="entry name" value="S-AdoMet_synt_central"/>
</dbReference>
<dbReference type="InterPro" id="IPR022628">
    <property type="entry name" value="S-AdoMet_synt_N"/>
</dbReference>
<dbReference type="InterPro" id="IPR002133">
    <property type="entry name" value="S-AdoMet_synthetase"/>
</dbReference>
<dbReference type="InterPro" id="IPR022636">
    <property type="entry name" value="S-AdoMet_synthetase_sfam"/>
</dbReference>
<dbReference type="NCBIfam" id="TIGR01034">
    <property type="entry name" value="metK"/>
    <property type="match status" value="1"/>
</dbReference>
<dbReference type="PANTHER" id="PTHR11964">
    <property type="entry name" value="S-ADENOSYLMETHIONINE SYNTHETASE"/>
    <property type="match status" value="1"/>
</dbReference>
<dbReference type="Pfam" id="PF02773">
    <property type="entry name" value="S-AdoMet_synt_C"/>
    <property type="match status" value="1"/>
</dbReference>
<dbReference type="Pfam" id="PF02772">
    <property type="entry name" value="S-AdoMet_synt_M"/>
    <property type="match status" value="1"/>
</dbReference>
<dbReference type="Pfam" id="PF00438">
    <property type="entry name" value="S-AdoMet_synt_N"/>
    <property type="match status" value="1"/>
</dbReference>
<dbReference type="PIRSF" id="PIRSF000497">
    <property type="entry name" value="MAT"/>
    <property type="match status" value="1"/>
</dbReference>
<dbReference type="SUPFAM" id="SSF55973">
    <property type="entry name" value="S-adenosylmethionine synthetase"/>
    <property type="match status" value="3"/>
</dbReference>
<dbReference type="PROSITE" id="PS00376">
    <property type="entry name" value="ADOMET_SYNTHASE_1"/>
    <property type="match status" value="1"/>
</dbReference>
<dbReference type="PROSITE" id="PS00377">
    <property type="entry name" value="ADOMET_SYNTHASE_2"/>
    <property type="match status" value="1"/>
</dbReference>
<proteinExistence type="evidence at transcript level"/>
<reference key="1">
    <citation type="journal article" date="2006" name="Plant Biotechnol.">
        <title>Transcriptional response of glycinebetaine-related genes to salt stress and light in leaf beet.</title>
        <authorList>
            <person name="Tabuchi T."/>
            <person name="Okada T."/>
            <person name="Takashima Y."/>
            <person name="Azuma T."/>
            <person name="Nanmori T."/>
            <person name="Yasuda T."/>
        </authorList>
    </citation>
    <scope>NUCLEOTIDE SEQUENCE [MRNA]</scope>
    <scope>FUNCTION</scope>
    <scope>INDUCTION</scope>
    <source>
        <tissue>Leaf</tissue>
    </source>
</reference>
<name>METK1_BETVU</name>